<evidence type="ECO:0000250" key="1">
    <source>
        <dbReference type="UniProtKB" id="Q39547"/>
    </source>
</evidence>
<evidence type="ECO:0000250" key="2">
    <source>
        <dbReference type="UniProtKB" id="Q84WS0"/>
    </source>
</evidence>
<evidence type="ECO:0000255" key="3"/>
<evidence type="ECO:0000255" key="4">
    <source>
        <dbReference type="PROSITE-ProRule" id="PRU00498"/>
    </source>
</evidence>
<evidence type="ECO:0000255" key="5">
    <source>
        <dbReference type="PROSITE-ProRule" id="PRU01240"/>
    </source>
</evidence>
<evidence type="ECO:0000255" key="6">
    <source>
        <dbReference type="PROSITE-ProRule" id="PRU10082"/>
    </source>
</evidence>
<evidence type="ECO:0000303" key="7">
    <source>
    </source>
</evidence>
<evidence type="ECO:0000305" key="8"/>
<evidence type="ECO:0000312" key="9">
    <source>
        <dbReference type="Araport" id="AT1G66220"/>
    </source>
</evidence>
<evidence type="ECO:0000312" key="10">
    <source>
        <dbReference type="EMBL" id="AAG51764.1"/>
    </source>
</evidence>
<protein>
    <recommendedName>
        <fullName evidence="7">Subtilisin-like protease SBT3.17</fullName>
        <ecNumber evidence="6">3.4.21.-</ecNumber>
    </recommendedName>
    <alternativeName>
        <fullName evidence="7">Subtilase subfamily 3 member 17</fullName>
        <shortName evidence="7">AtSBT3.17</shortName>
    </alternativeName>
</protein>
<reference key="1">
    <citation type="journal article" date="2000" name="Nature">
        <title>Sequence and analysis of chromosome 1 of the plant Arabidopsis thaliana.</title>
        <authorList>
            <person name="Theologis A."/>
            <person name="Ecker J.R."/>
            <person name="Palm C.J."/>
            <person name="Federspiel N.A."/>
            <person name="Kaul S."/>
            <person name="White O."/>
            <person name="Alonso J."/>
            <person name="Altafi H."/>
            <person name="Araujo R."/>
            <person name="Bowman C.L."/>
            <person name="Brooks S.Y."/>
            <person name="Buehler E."/>
            <person name="Chan A."/>
            <person name="Chao Q."/>
            <person name="Chen H."/>
            <person name="Cheuk R.F."/>
            <person name="Chin C.W."/>
            <person name="Chung M.K."/>
            <person name="Conn L."/>
            <person name="Conway A.B."/>
            <person name="Conway A.R."/>
            <person name="Creasy T.H."/>
            <person name="Dewar K."/>
            <person name="Dunn P."/>
            <person name="Etgu P."/>
            <person name="Feldblyum T.V."/>
            <person name="Feng J.-D."/>
            <person name="Fong B."/>
            <person name="Fujii C.Y."/>
            <person name="Gill J.E."/>
            <person name="Goldsmith A.D."/>
            <person name="Haas B."/>
            <person name="Hansen N.F."/>
            <person name="Hughes B."/>
            <person name="Huizar L."/>
            <person name="Hunter J.L."/>
            <person name="Jenkins J."/>
            <person name="Johnson-Hopson C."/>
            <person name="Khan S."/>
            <person name="Khaykin E."/>
            <person name="Kim C.J."/>
            <person name="Koo H.L."/>
            <person name="Kremenetskaia I."/>
            <person name="Kurtz D.B."/>
            <person name="Kwan A."/>
            <person name="Lam B."/>
            <person name="Langin-Hooper S."/>
            <person name="Lee A."/>
            <person name="Lee J.M."/>
            <person name="Lenz C.A."/>
            <person name="Li J.H."/>
            <person name="Li Y.-P."/>
            <person name="Lin X."/>
            <person name="Liu S.X."/>
            <person name="Liu Z.A."/>
            <person name="Luros J.S."/>
            <person name="Maiti R."/>
            <person name="Marziali A."/>
            <person name="Militscher J."/>
            <person name="Miranda M."/>
            <person name="Nguyen M."/>
            <person name="Nierman W.C."/>
            <person name="Osborne B.I."/>
            <person name="Pai G."/>
            <person name="Peterson J."/>
            <person name="Pham P.K."/>
            <person name="Rizzo M."/>
            <person name="Rooney T."/>
            <person name="Rowley D."/>
            <person name="Sakano H."/>
            <person name="Salzberg S.L."/>
            <person name="Schwartz J.R."/>
            <person name="Shinn P."/>
            <person name="Southwick A.M."/>
            <person name="Sun H."/>
            <person name="Tallon L.J."/>
            <person name="Tambunga G."/>
            <person name="Toriumi M.J."/>
            <person name="Town C.D."/>
            <person name="Utterback T."/>
            <person name="Van Aken S."/>
            <person name="Vaysberg M."/>
            <person name="Vysotskaia V.S."/>
            <person name="Walker M."/>
            <person name="Wu D."/>
            <person name="Yu G."/>
            <person name="Fraser C.M."/>
            <person name="Venter J.C."/>
            <person name="Davis R.W."/>
        </authorList>
    </citation>
    <scope>NUCLEOTIDE SEQUENCE [LARGE SCALE GENOMIC DNA]</scope>
    <source>
        <strain>cv. Columbia</strain>
    </source>
</reference>
<reference key="2">
    <citation type="journal article" date="2017" name="Plant J.">
        <title>Araport11: a complete reannotation of the Arabidopsis thaliana reference genome.</title>
        <authorList>
            <person name="Cheng C.Y."/>
            <person name="Krishnakumar V."/>
            <person name="Chan A.P."/>
            <person name="Thibaud-Nissen F."/>
            <person name="Schobel S."/>
            <person name="Town C.D."/>
        </authorList>
    </citation>
    <scope>GENOME REANNOTATION</scope>
    <source>
        <strain>cv. Columbia</strain>
    </source>
</reference>
<reference key="3">
    <citation type="journal article" date="2005" name="PLoS Comput. Biol.">
        <title>Inferring hypotheses on functional relationships of genes: Analysis of the Arabidopsis thaliana subtilase gene family.</title>
        <authorList>
            <person name="Rautengarten C."/>
            <person name="Steinhauser D."/>
            <person name="Bussis D."/>
            <person name="Stintzi A."/>
            <person name="Schaller A."/>
            <person name="Kopka J."/>
            <person name="Altmann T."/>
        </authorList>
    </citation>
    <scope>GENE FAMILY</scope>
    <scope>NOMENCLATURE</scope>
</reference>
<accession>Q9C7U8</accession>
<comment type="subcellular location">
    <subcellularLocation>
        <location evidence="2">Secreted</location>
    </subcellularLocation>
</comment>
<comment type="similarity">
    <text evidence="8">Belongs to the peptidase S8 family.</text>
</comment>
<name>SBT3H_ARATH</name>
<sequence length="753" mass="80793">MGNSFLIADTSSLVIGLLLILNGVFISAAKHYGLNKIHIVHLGAKQHDTPELVTKSHYQILEPLLGSKEAAKNSLVYNYKHGFSGFAAKLTASQAKNLSAHPEVLRVVPSRVMRLKTTRTFDYLGLLPTSPKSLLHKTKMGSEAIIGVIDSGIWPESQSFNDTGLGPIPKRWKGKCLSGNGFDAKKHCNKKLIGAEYLTVGLMEMTDGIYDYPSLGESMSPRDHVGHGTHVAAIAAGSFVANANYKGLAGGTARGAAPHARIAMYKVCWREVGCITADLLKAIDHSIRDGVDVISISIGTDAPASFDIDQSDIGFGSFHAVMKGIPVVASAGNEGPNAQTVDNVAPWIITVAATSLDRSFPIPITLGNNLTILGEGLNTFPEVGFTNLILSDEMLSRSIEQGKTQGTIVLAFTANDEMIRKANSITNAGCAGIIYAQSVIDPTVCSSVDVPCAVVDYEYGTDILYYMQTTVVPKAKLSPSKTLIGRPIASRVPRFSCRGPNSVSPAILKPDIAAPGVNVLSAVSGVYKFMSGTSMATPAVSGIVGLLRQTHPHWSPAAIRSALVTTAWKTDPSGEPIFSEGSTRKLADPFDYGGGLINPEKVTHPGLIYDMGIDDYLHYLCSAEYDDDSISKLLGKTYNCTSPKPSMLDFNLPSITIPSLTGEVTVTRTVRNVGPARSVYRPVIESPLGIELDVKPKTLVFGSNITKITFSVRVKSSHRVNTDFYFGSLCWTDGVHNVTIPVSVRTKFMRNYV</sequence>
<keyword id="KW-0068">Autocatalytic cleavage</keyword>
<keyword id="KW-0325">Glycoprotein</keyword>
<keyword id="KW-0378">Hydrolase</keyword>
<keyword id="KW-0645">Protease</keyword>
<keyword id="KW-1185">Reference proteome</keyword>
<keyword id="KW-0964">Secreted</keyword>
<keyword id="KW-0720">Serine protease</keyword>
<keyword id="KW-0732">Signal</keyword>
<keyword id="KW-0865">Zymogen</keyword>
<organism>
    <name type="scientific">Arabidopsis thaliana</name>
    <name type="common">Mouse-ear cress</name>
    <dbReference type="NCBI Taxonomy" id="3702"/>
    <lineage>
        <taxon>Eukaryota</taxon>
        <taxon>Viridiplantae</taxon>
        <taxon>Streptophyta</taxon>
        <taxon>Embryophyta</taxon>
        <taxon>Tracheophyta</taxon>
        <taxon>Spermatophyta</taxon>
        <taxon>Magnoliopsida</taxon>
        <taxon>eudicotyledons</taxon>
        <taxon>Gunneridae</taxon>
        <taxon>Pentapetalae</taxon>
        <taxon>rosids</taxon>
        <taxon>malvids</taxon>
        <taxon>Brassicales</taxon>
        <taxon>Brassicaceae</taxon>
        <taxon>Camelineae</taxon>
        <taxon>Arabidopsis</taxon>
    </lineage>
</organism>
<gene>
    <name evidence="7" type="primary">SBT3.17</name>
    <name evidence="9" type="ordered locus">At1g66220</name>
    <name evidence="10" type="ORF">T6J19.4</name>
</gene>
<feature type="signal peptide" evidence="3">
    <location>
        <begin position="1"/>
        <end position="29"/>
    </location>
</feature>
<feature type="propeptide" id="PRO_0000435219" description="Activation peptide" evidence="1">
    <location>
        <begin position="30"/>
        <end position="116"/>
    </location>
</feature>
<feature type="chain" id="PRO_0000435220" description="Subtilisin-like protease SBT3.17" evidence="3">
    <location>
        <begin position="117"/>
        <end status="unknown"/>
    </location>
</feature>
<feature type="propeptide" id="PRO_0000435221" evidence="1">
    <location>
        <begin status="unknown"/>
        <end position="753"/>
    </location>
</feature>
<feature type="domain" description="Inhibitor I9" evidence="3">
    <location>
        <begin position="38"/>
        <end position="115"/>
    </location>
</feature>
<feature type="domain" description="Peptidase S8" evidence="5">
    <location>
        <begin position="120"/>
        <end position="603"/>
    </location>
</feature>
<feature type="active site" description="Charge relay system" evidence="5">
    <location>
        <position position="150"/>
    </location>
</feature>
<feature type="active site" description="Charge relay system" evidence="5">
    <location>
        <position position="227"/>
    </location>
</feature>
<feature type="active site" description="Charge relay system" evidence="5">
    <location>
        <position position="534"/>
    </location>
</feature>
<feature type="glycosylation site" description="N-linked (GlcNAc...) asparagine" evidence="4">
    <location>
        <position position="97"/>
    </location>
</feature>
<feature type="glycosylation site" description="N-linked (GlcNAc...) asparagine" evidence="4">
    <location>
        <position position="161"/>
    </location>
</feature>
<feature type="glycosylation site" description="N-linked (GlcNAc...) asparagine" evidence="4">
    <location>
        <position position="369"/>
    </location>
</feature>
<feature type="glycosylation site" description="N-linked (GlcNAc...) asparagine" evidence="4">
    <location>
        <position position="639"/>
    </location>
</feature>
<feature type="glycosylation site" description="N-linked (GlcNAc...) asparagine" evidence="4">
    <location>
        <position position="704"/>
    </location>
</feature>
<feature type="glycosylation site" description="N-linked (GlcNAc...) asparagine" evidence="4">
    <location>
        <position position="737"/>
    </location>
</feature>
<dbReference type="EC" id="3.4.21.-" evidence="6"/>
<dbReference type="EMBL" id="AC066691">
    <property type="protein sequence ID" value="AAG51764.1"/>
    <property type="molecule type" value="Genomic_DNA"/>
</dbReference>
<dbReference type="EMBL" id="CP002684">
    <property type="protein sequence ID" value="AEE34478.1"/>
    <property type="molecule type" value="Genomic_DNA"/>
</dbReference>
<dbReference type="PIR" id="B96687">
    <property type="entry name" value="B96687"/>
</dbReference>
<dbReference type="RefSeq" id="NP_564869.1">
    <property type="nucleotide sequence ID" value="NM_105293.1"/>
</dbReference>
<dbReference type="SMR" id="Q9C7U8"/>
<dbReference type="STRING" id="3702.Q9C7U8"/>
<dbReference type="MEROPS" id="S08.A33"/>
<dbReference type="GlyCosmos" id="Q9C7U8">
    <property type="glycosylation" value="6 sites, No reported glycans"/>
</dbReference>
<dbReference type="GlyGen" id="Q9C7U8">
    <property type="glycosylation" value="7 sites"/>
</dbReference>
<dbReference type="PaxDb" id="3702-AT1G66220.1"/>
<dbReference type="ProteomicsDB" id="232798"/>
<dbReference type="EnsemblPlants" id="AT1G66220.1">
    <property type="protein sequence ID" value="AT1G66220.1"/>
    <property type="gene ID" value="AT1G66220"/>
</dbReference>
<dbReference type="GeneID" id="842937"/>
<dbReference type="Gramene" id="AT1G66220.1">
    <property type="protein sequence ID" value="AT1G66220.1"/>
    <property type="gene ID" value="AT1G66220"/>
</dbReference>
<dbReference type="KEGG" id="ath:AT1G66220"/>
<dbReference type="Araport" id="AT1G66220"/>
<dbReference type="TAIR" id="AT1G66220"/>
<dbReference type="eggNOG" id="ENOG502QSF0">
    <property type="taxonomic scope" value="Eukaryota"/>
</dbReference>
<dbReference type="HOGENOM" id="CLU_000625_4_2_1"/>
<dbReference type="InParanoid" id="Q9C7U8"/>
<dbReference type="OMA" id="YLMDRGG"/>
<dbReference type="PhylomeDB" id="Q9C7U8"/>
<dbReference type="PRO" id="PR:Q9C7U8"/>
<dbReference type="Proteomes" id="UP000006548">
    <property type="component" value="Chromosome 1"/>
</dbReference>
<dbReference type="ExpressionAtlas" id="Q9C7U8">
    <property type="expression patterns" value="baseline and differential"/>
</dbReference>
<dbReference type="GO" id="GO:0005576">
    <property type="term" value="C:extracellular region"/>
    <property type="evidence" value="ECO:0007669"/>
    <property type="project" value="UniProtKB-SubCell"/>
</dbReference>
<dbReference type="GO" id="GO:0004252">
    <property type="term" value="F:serine-type endopeptidase activity"/>
    <property type="evidence" value="ECO:0007669"/>
    <property type="project" value="InterPro"/>
</dbReference>
<dbReference type="GO" id="GO:0006508">
    <property type="term" value="P:proteolysis"/>
    <property type="evidence" value="ECO:0007669"/>
    <property type="project" value="UniProtKB-KW"/>
</dbReference>
<dbReference type="CDD" id="cd02120">
    <property type="entry name" value="PA_subtilisin_like"/>
    <property type="match status" value="1"/>
</dbReference>
<dbReference type="CDD" id="cd04852">
    <property type="entry name" value="Peptidases_S8_3"/>
    <property type="match status" value="1"/>
</dbReference>
<dbReference type="FunFam" id="2.60.40.2310:FF:000001">
    <property type="entry name" value="Subtilisin-like protease SBT1.5"/>
    <property type="match status" value="1"/>
</dbReference>
<dbReference type="FunFam" id="3.40.50.200:FF:000006">
    <property type="entry name" value="Subtilisin-like protease SBT1.5"/>
    <property type="match status" value="1"/>
</dbReference>
<dbReference type="FunFam" id="3.30.70.80:FF:000002">
    <property type="entry name" value="Subtilisin-like protease SBT5.3"/>
    <property type="match status" value="1"/>
</dbReference>
<dbReference type="Gene3D" id="2.60.40.2310">
    <property type="match status" value="1"/>
</dbReference>
<dbReference type="Gene3D" id="3.50.30.30">
    <property type="match status" value="1"/>
</dbReference>
<dbReference type="Gene3D" id="3.30.70.80">
    <property type="entry name" value="Peptidase S8 propeptide/proteinase inhibitor I9"/>
    <property type="match status" value="1"/>
</dbReference>
<dbReference type="Gene3D" id="3.40.50.200">
    <property type="entry name" value="Peptidase S8/S53 domain"/>
    <property type="match status" value="1"/>
</dbReference>
<dbReference type="InterPro" id="IPR000209">
    <property type="entry name" value="Peptidase_S8/S53_dom"/>
</dbReference>
<dbReference type="InterPro" id="IPR036852">
    <property type="entry name" value="Peptidase_S8/S53_dom_sf"/>
</dbReference>
<dbReference type="InterPro" id="IPR023828">
    <property type="entry name" value="Peptidase_S8_Ser-AS"/>
</dbReference>
<dbReference type="InterPro" id="IPR015500">
    <property type="entry name" value="Peptidase_S8_subtilisin-rel"/>
</dbReference>
<dbReference type="InterPro" id="IPR034197">
    <property type="entry name" value="Peptidases_S8_3"/>
</dbReference>
<dbReference type="InterPro" id="IPR010259">
    <property type="entry name" value="S8pro/Inhibitor_I9"/>
</dbReference>
<dbReference type="InterPro" id="IPR037045">
    <property type="entry name" value="S8pro/Inhibitor_I9_sf"/>
</dbReference>
<dbReference type="InterPro" id="IPR045051">
    <property type="entry name" value="SBT"/>
</dbReference>
<dbReference type="InterPro" id="IPR041469">
    <property type="entry name" value="Subtilisin-like_FN3"/>
</dbReference>
<dbReference type="PANTHER" id="PTHR10795">
    <property type="entry name" value="PROPROTEIN CONVERTASE SUBTILISIN/KEXIN"/>
    <property type="match status" value="1"/>
</dbReference>
<dbReference type="Pfam" id="PF17766">
    <property type="entry name" value="fn3_6"/>
    <property type="match status" value="1"/>
</dbReference>
<dbReference type="Pfam" id="PF05922">
    <property type="entry name" value="Inhibitor_I9"/>
    <property type="match status" value="1"/>
</dbReference>
<dbReference type="Pfam" id="PF00082">
    <property type="entry name" value="Peptidase_S8"/>
    <property type="match status" value="1"/>
</dbReference>
<dbReference type="PRINTS" id="PR00723">
    <property type="entry name" value="SUBTILISIN"/>
</dbReference>
<dbReference type="SUPFAM" id="SSF52743">
    <property type="entry name" value="Subtilisin-like"/>
    <property type="match status" value="1"/>
</dbReference>
<dbReference type="PROSITE" id="PS51892">
    <property type="entry name" value="SUBTILASE"/>
    <property type="match status" value="1"/>
</dbReference>
<dbReference type="PROSITE" id="PS00138">
    <property type="entry name" value="SUBTILASE_SER"/>
    <property type="match status" value="1"/>
</dbReference>
<proteinExistence type="inferred from homology"/>